<reference key="1">
    <citation type="journal article" date="1999" name="Nature">
        <title>Sequence and analysis of chromosome 2 of the plant Arabidopsis thaliana.</title>
        <authorList>
            <person name="Lin X."/>
            <person name="Kaul S."/>
            <person name="Rounsley S.D."/>
            <person name="Shea T.P."/>
            <person name="Benito M.-I."/>
            <person name="Town C.D."/>
            <person name="Fujii C.Y."/>
            <person name="Mason T.M."/>
            <person name="Bowman C.L."/>
            <person name="Barnstead M.E."/>
            <person name="Feldblyum T.V."/>
            <person name="Buell C.R."/>
            <person name="Ketchum K.A."/>
            <person name="Lee J.J."/>
            <person name="Ronning C.M."/>
            <person name="Koo H.L."/>
            <person name="Moffat K.S."/>
            <person name="Cronin L.A."/>
            <person name="Shen M."/>
            <person name="Pai G."/>
            <person name="Van Aken S."/>
            <person name="Umayam L."/>
            <person name="Tallon L.J."/>
            <person name="Gill J.E."/>
            <person name="Adams M.D."/>
            <person name="Carrera A.J."/>
            <person name="Creasy T.H."/>
            <person name="Goodman H.M."/>
            <person name="Somerville C.R."/>
            <person name="Copenhaver G.P."/>
            <person name="Preuss D."/>
            <person name="Nierman W.C."/>
            <person name="White O."/>
            <person name="Eisen J.A."/>
            <person name="Salzberg S.L."/>
            <person name="Fraser C.M."/>
            <person name="Venter J.C."/>
        </authorList>
    </citation>
    <scope>NUCLEOTIDE SEQUENCE [LARGE SCALE GENOMIC DNA]</scope>
    <source>
        <strain>cv. Columbia</strain>
    </source>
</reference>
<reference key="2">
    <citation type="journal article" date="2017" name="Plant J.">
        <title>Araport11: a complete reannotation of the Arabidopsis thaliana reference genome.</title>
        <authorList>
            <person name="Cheng C.Y."/>
            <person name="Krishnakumar V."/>
            <person name="Chan A.P."/>
            <person name="Thibaud-Nissen F."/>
            <person name="Schobel S."/>
            <person name="Town C.D."/>
        </authorList>
    </citation>
    <scope>GENOME REANNOTATION</scope>
    <source>
        <strain>cv. Columbia</strain>
    </source>
</reference>
<reference key="3">
    <citation type="journal article" date="2003" name="Science">
        <title>Empirical analysis of transcriptional activity in the Arabidopsis genome.</title>
        <authorList>
            <person name="Yamada K."/>
            <person name="Lim J."/>
            <person name="Dale J.M."/>
            <person name="Chen H."/>
            <person name="Shinn P."/>
            <person name="Palm C.J."/>
            <person name="Southwick A.M."/>
            <person name="Wu H.C."/>
            <person name="Kim C.J."/>
            <person name="Nguyen M."/>
            <person name="Pham P.K."/>
            <person name="Cheuk R.F."/>
            <person name="Karlin-Newmann G."/>
            <person name="Liu S.X."/>
            <person name="Lam B."/>
            <person name="Sakano H."/>
            <person name="Wu T."/>
            <person name="Yu G."/>
            <person name="Miranda M."/>
            <person name="Quach H.L."/>
            <person name="Tripp M."/>
            <person name="Chang C.H."/>
            <person name="Lee J.M."/>
            <person name="Toriumi M.J."/>
            <person name="Chan M.M."/>
            <person name="Tang C.C."/>
            <person name="Onodera C.S."/>
            <person name="Deng J.M."/>
            <person name="Akiyama K."/>
            <person name="Ansari Y."/>
            <person name="Arakawa T."/>
            <person name="Banh J."/>
            <person name="Banno F."/>
            <person name="Bowser L."/>
            <person name="Brooks S.Y."/>
            <person name="Carninci P."/>
            <person name="Chao Q."/>
            <person name="Choy N."/>
            <person name="Enju A."/>
            <person name="Goldsmith A.D."/>
            <person name="Gurjal M."/>
            <person name="Hansen N.F."/>
            <person name="Hayashizaki Y."/>
            <person name="Johnson-Hopson C."/>
            <person name="Hsuan V.W."/>
            <person name="Iida K."/>
            <person name="Karnes M."/>
            <person name="Khan S."/>
            <person name="Koesema E."/>
            <person name="Ishida J."/>
            <person name="Jiang P.X."/>
            <person name="Jones T."/>
            <person name="Kawai J."/>
            <person name="Kamiya A."/>
            <person name="Meyers C."/>
            <person name="Nakajima M."/>
            <person name="Narusaka M."/>
            <person name="Seki M."/>
            <person name="Sakurai T."/>
            <person name="Satou M."/>
            <person name="Tamse R."/>
            <person name="Vaysberg M."/>
            <person name="Wallender E.K."/>
            <person name="Wong C."/>
            <person name="Yamamura Y."/>
            <person name="Yuan S."/>
            <person name="Shinozaki K."/>
            <person name="Davis R.W."/>
            <person name="Theologis A."/>
            <person name="Ecker J.R."/>
        </authorList>
    </citation>
    <scope>NUCLEOTIDE SEQUENCE [LARGE SCALE MRNA]</scope>
    <source>
        <strain>cv. Columbia</strain>
    </source>
</reference>
<reference key="4">
    <citation type="journal article" date="2005" name="Plant Mol. Biol.">
        <title>Specific interactions between Dicer-like proteins and HYL1/DRB-family dsRNA-binding proteins in Arabidopsis thaliana.</title>
        <authorList>
            <person name="Hiraguri A."/>
            <person name="Itoh R."/>
            <person name="Kondo N."/>
            <person name="Nomura Y."/>
            <person name="Aizawa D."/>
            <person name="Murai Y."/>
            <person name="Koiwa H."/>
            <person name="Seki M."/>
            <person name="Shinozaki K."/>
            <person name="Fukuhara T."/>
        </authorList>
    </citation>
    <scope>FUNCTION</scope>
    <scope>SUBUNIT</scope>
    <scope>SUBCELLULAR LOCATION</scope>
    <scope>INTERACTION WITH DCL1; DCL5; DRB1 AND DRB5</scope>
</reference>
<reference key="5">
    <citation type="journal article" date="2008" name="FEBS Lett.">
        <title>The roles of plant dsRNA-binding proteins in RNAi-like pathways.</title>
        <authorList>
            <person name="Curtin S.J."/>
            <person name="Watson J.M."/>
            <person name="Smith N.A."/>
            <person name="Eamens A.L."/>
            <person name="Blanchard C.L."/>
            <person name="Waterhouse P.M."/>
        </authorList>
    </citation>
    <scope>TISSUE SPECIFICITY</scope>
    <scope>DISRUPTION PHENOTYPE</scope>
</reference>
<organism>
    <name type="scientific">Arabidopsis thaliana</name>
    <name type="common">Mouse-ear cress</name>
    <dbReference type="NCBI Taxonomy" id="3702"/>
    <lineage>
        <taxon>Eukaryota</taxon>
        <taxon>Viridiplantae</taxon>
        <taxon>Streptophyta</taxon>
        <taxon>Embryophyta</taxon>
        <taxon>Tracheophyta</taxon>
        <taxon>Spermatophyta</taxon>
        <taxon>Magnoliopsida</taxon>
        <taxon>eudicotyledons</taxon>
        <taxon>Gunneridae</taxon>
        <taxon>Pentapetalae</taxon>
        <taxon>rosids</taxon>
        <taxon>malvids</taxon>
        <taxon>Brassicales</taxon>
        <taxon>Brassicaceae</taxon>
        <taxon>Camelineae</taxon>
        <taxon>Arabidopsis</taxon>
    </lineage>
</organism>
<feature type="chain" id="PRO_0000404653" description="Double-stranded RNA-binding protein 2">
    <location>
        <begin position="1"/>
        <end position="434"/>
    </location>
</feature>
<feature type="domain" description="DRBM 1" evidence="1">
    <location>
        <begin position="1"/>
        <end position="70"/>
    </location>
</feature>
<feature type="domain" description="DRBM 2" evidence="1">
    <location>
        <begin position="87"/>
        <end position="155"/>
    </location>
</feature>
<feature type="region of interest" description="Disordered" evidence="2">
    <location>
        <begin position="402"/>
        <end position="434"/>
    </location>
</feature>
<keyword id="KW-0963">Cytoplasm</keyword>
<keyword id="KW-1185">Reference proteome</keyword>
<keyword id="KW-0677">Repeat</keyword>
<keyword id="KW-0694">RNA-binding</keyword>
<keyword id="KW-0943">RNA-mediated gene silencing</keyword>
<proteinExistence type="evidence at protein level"/>
<dbReference type="EMBL" id="AC006283">
    <property type="protein sequence ID" value="AAD20688.1"/>
    <property type="molecule type" value="Genomic_DNA"/>
</dbReference>
<dbReference type="EMBL" id="CP002685">
    <property type="protein sequence ID" value="AEC08114.1"/>
    <property type="molecule type" value="Genomic_DNA"/>
</dbReference>
<dbReference type="EMBL" id="AY034976">
    <property type="protein sequence ID" value="AAK59481.1"/>
    <property type="molecule type" value="mRNA"/>
</dbReference>
<dbReference type="EMBL" id="AY062965">
    <property type="protein sequence ID" value="AAL33811.1"/>
    <property type="molecule type" value="mRNA"/>
</dbReference>
<dbReference type="PIR" id="B84684">
    <property type="entry name" value="B84684"/>
</dbReference>
<dbReference type="RefSeq" id="NP_565672.1">
    <property type="nucleotide sequence ID" value="NM_128398.4"/>
</dbReference>
<dbReference type="SMR" id="Q9SKN2"/>
<dbReference type="BioGRID" id="2736">
    <property type="interactions" value="11"/>
</dbReference>
<dbReference type="FunCoup" id="Q9SKN2">
    <property type="interactions" value="2230"/>
</dbReference>
<dbReference type="IntAct" id="Q9SKN2">
    <property type="interactions" value="8"/>
</dbReference>
<dbReference type="STRING" id="3702.Q9SKN2"/>
<dbReference type="PaxDb" id="3702-AT2G28380.1"/>
<dbReference type="ProteomicsDB" id="241258"/>
<dbReference type="EnsemblPlants" id="AT2G28380.1">
    <property type="protein sequence ID" value="AT2G28380.1"/>
    <property type="gene ID" value="AT2G28380"/>
</dbReference>
<dbReference type="GeneID" id="817386"/>
<dbReference type="Gramene" id="AT2G28380.1">
    <property type="protein sequence ID" value="AT2G28380.1"/>
    <property type="gene ID" value="AT2G28380"/>
</dbReference>
<dbReference type="KEGG" id="ath:AT2G28380"/>
<dbReference type="Araport" id="AT2G28380"/>
<dbReference type="TAIR" id="AT2G28380">
    <property type="gene designation" value="DRB2"/>
</dbReference>
<dbReference type="eggNOG" id="ENOG502QTBA">
    <property type="taxonomic scope" value="Eukaryota"/>
</dbReference>
<dbReference type="HOGENOM" id="CLU_038996_1_1_1"/>
<dbReference type="InParanoid" id="Q9SKN2"/>
<dbReference type="OMA" id="KKFFMQN"/>
<dbReference type="PhylomeDB" id="Q9SKN2"/>
<dbReference type="PRO" id="PR:Q9SKN2"/>
<dbReference type="Proteomes" id="UP000006548">
    <property type="component" value="Chromosome 2"/>
</dbReference>
<dbReference type="ExpressionAtlas" id="Q9SKN2">
    <property type="expression patterns" value="baseline and differential"/>
</dbReference>
<dbReference type="GO" id="GO:0005737">
    <property type="term" value="C:cytoplasm"/>
    <property type="evidence" value="ECO:0000314"/>
    <property type="project" value="TAIR"/>
</dbReference>
<dbReference type="GO" id="GO:0003725">
    <property type="term" value="F:double-stranded RNA binding"/>
    <property type="evidence" value="ECO:0000314"/>
    <property type="project" value="TAIR"/>
</dbReference>
<dbReference type="GO" id="GO:0035196">
    <property type="term" value="P:miRNA processing"/>
    <property type="evidence" value="ECO:0000315"/>
    <property type="project" value="TAIR"/>
</dbReference>
<dbReference type="CDD" id="cd19907">
    <property type="entry name" value="DSRM_AtDRB-like_rpt1"/>
    <property type="match status" value="1"/>
</dbReference>
<dbReference type="CDD" id="cd19908">
    <property type="entry name" value="DSRM_AtDRB-like_rpt2"/>
    <property type="match status" value="1"/>
</dbReference>
<dbReference type="FunFam" id="3.30.160.20:FF:000036">
    <property type="entry name" value="Double-stranded RNA-binding protein 2"/>
    <property type="match status" value="2"/>
</dbReference>
<dbReference type="Gene3D" id="3.30.160.20">
    <property type="match status" value="2"/>
</dbReference>
<dbReference type="InterPro" id="IPR044450">
    <property type="entry name" value="AtDRB-like_DSRM_1"/>
</dbReference>
<dbReference type="InterPro" id="IPR044451">
    <property type="entry name" value="AtDRB-like_DSRM_2"/>
</dbReference>
<dbReference type="InterPro" id="IPR014720">
    <property type="entry name" value="dsRBD_dom"/>
</dbReference>
<dbReference type="PANTHER" id="PTHR46031">
    <property type="match status" value="1"/>
</dbReference>
<dbReference type="PANTHER" id="PTHR46031:SF26">
    <property type="entry name" value="DOUBLE-STRANDED RNA-BINDING PROTEIN 2"/>
    <property type="match status" value="1"/>
</dbReference>
<dbReference type="Pfam" id="PF00035">
    <property type="entry name" value="dsrm"/>
    <property type="match status" value="2"/>
</dbReference>
<dbReference type="SMART" id="SM00358">
    <property type="entry name" value="DSRM"/>
    <property type="match status" value="2"/>
</dbReference>
<dbReference type="SUPFAM" id="SSF54768">
    <property type="entry name" value="dsRNA-binding domain-like"/>
    <property type="match status" value="2"/>
</dbReference>
<dbReference type="PROSITE" id="PS50137">
    <property type="entry name" value="DS_RBD"/>
    <property type="match status" value="2"/>
</dbReference>
<evidence type="ECO:0000255" key="1">
    <source>
        <dbReference type="PROSITE-ProRule" id="PRU00266"/>
    </source>
</evidence>
<evidence type="ECO:0000256" key="2">
    <source>
        <dbReference type="SAM" id="MobiDB-lite"/>
    </source>
</evidence>
<evidence type="ECO:0000269" key="3">
    <source>
    </source>
</evidence>
<evidence type="ECO:0000269" key="4">
    <source>
    </source>
</evidence>
<name>DRB2_ARATH</name>
<accession>Q9SKN2</accession>
<gene>
    <name type="primary">DRB2</name>
    <name type="ordered locus">At2g28380</name>
    <name type="ORF">T1B3.10</name>
</gene>
<sequence length="434" mass="47440">MYKNQLQELAQRSCFNLPSYTCIREGPDHAPRFKATVNFNGEIFESPQYCSTLRQAEHSAAEVALNALSNRGPSHSLAARILDETGVYKNLLQEIAQRVGAPLPRYTTFRSGLGHQPVFTGTVELAGITFTGDPAKNKKQAEKNAAMAAWSSLKQLAKETSSSMPEPENIDELEQVIIARALINYRIKENIGTGSSSSAPVPFAKKFFMQNLRPTSPQPSPATTSRILPFICPKQPSRSSRSSLAATSGIDRIMAAALESRSYQRPQQRFANPPYVPMRQFRSQCHGMAPPVTIRTAVPVFSAPPMPPPPCTNNTQLPSSVYVPSLMRTAPPVRIAPPVTIRTAVPVFASAPPVRIRTAVKPTVEAGETRISSVQEKESIPVLPDSLEIGVEGSTITITDCEKTASKETERAEFKDSSKGEPETARERLENLKI</sequence>
<protein>
    <recommendedName>
        <fullName>Double-stranded RNA-binding protein 2</fullName>
    </recommendedName>
    <alternativeName>
        <fullName>dsRNA-binding protein 2</fullName>
        <shortName>AtDRB2</shortName>
    </alternativeName>
</protein>
<comment type="function">
    <text evidence="3">Binds double-stranded RNA. May be involved in RNA-mediated silencing.</text>
</comment>
<comment type="subunit">
    <text evidence="3">Heterodimer with DRB1 or DRB5. Interacts with DCL1 and DCL5.</text>
</comment>
<comment type="subcellular location">
    <subcellularLocation>
        <location evidence="3">Cytoplasm</location>
    </subcellularLocation>
</comment>
<comment type="disruption phenotype">
    <text evidence="4">Flat, serrated, blue-green and ovoid leaves.</text>
</comment>